<dbReference type="EMBL" id="Z86111">
    <property type="protein sequence ID" value="CAB06800.1"/>
    <property type="molecule type" value="Genomic_DNA"/>
</dbReference>
<dbReference type="SMR" id="P0A478"/>
<dbReference type="GO" id="GO:0022625">
    <property type="term" value="C:cytosolic large ribosomal subunit"/>
    <property type="evidence" value="ECO:0007669"/>
    <property type="project" value="TreeGrafter"/>
</dbReference>
<dbReference type="GO" id="GO:0003735">
    <property type="term" value="F:structural constituent of ribosome"/>
    <property type="evidence" value="ECO:0007669"/>
    <property type="project" value="InterPro"/>
</dbReference>
<dbReference type="GO" id="GO:0006412">
    <property type="term" value="P:translation"/>
    <property type="evidence" value="ECO:0007669"/>
    <property type="project" value="UniProtKB-UniRule"/>
</dbReference>
<dbReference type="FunFam" id="2.30.30.790:FF:000001">
    <property type="entry name" value="50S ribosomal protein L19"/>
    <property type="match status" value="1"/>
</dbReference>
<dbReference type="Gene3D" id="2.30.30.790">
    <property type="match status" value="1"/>
</dbReference>
<dbReference type="HAMAP" id="MF_00402">
    <property type="entry name" value="Ribosomal_bL19"/>
    <property type="match status" value="1"/>
</dbReference>
<dbReference type="InterPro" id="IPR001857">
    <property type="entry name" value="Ribosomal_bL19"/>
</dbReference>
<dbReference type="InterPro" id="IPR018257">
    <property type="entry name" value="Ribosomal_bL19_CS"/>
</dbReference>
<dbReference type="InterPro" id="IPR038657">
    <property type="entry name" value="Ribosomal_bL19_sf"/>
</dbReference>
<dbReference type="InterPro" id="IPR008991">
    <property type="entry name" value="Translation_prot_SH3-like_sf"/>
</dbReference>
<dbReference type="NCBIfam" id="TIGR01024">
    <property type="entry name" value="rplS_bact"/>
    <property type="match status" value="1"/>
</dbReference>
<dbReference type="PANTHER" id="PTHR15680:SF9">
    <property type="entry name" value="LARGE RIBOSOMAL SUBUNIT PROTEIN BL19M"/>
    <property type="match status" value="1"/>
</dbReference>
<dbReference type="PANTHER" id="PTHR15680">
    <property type="entry name" value="RIBOSOMAL PROTEIN L19"/>
    <property type="match status" value="1"/>
</dbReference>
<dbReference type="Pfam" id="PF01245">
    <property type="entry name" value="Ribosomal_L19"/>
    <property type="match status" value="1"/>
</dbReference>
<dbReference type="PIRSF" id="PIRSF002191">
    <property type="entry name" value="Ribosomal_L19"/>
    <property type="match status" value="1"/>
</dbReference>
<dbReference type="PRINTS" id="PR00061">
    <property type="entry name" value="RIBOSOMALL19"/>
</dbReference>
<dbReference type="SUPFAM" id="SSF50104">
    <property type="entry name" value="Translation proteins SH3-like domain"/>
    <property type="match status" value="1"/>
</dbReference>
<dbReference type="PROSITE" id="PS01015">
    <property type="entry name" value="RIBOSOMAL_L19"/>
    <property type="match status" value="1"/>
</dbReference>
<reference key="1">
    <citation type="submission" date="1997-02" db="EMBL/GenBank/DDBJ databases">
        <authorList>
            <person name="Parro V."/>
            <person name="Mellado R.P."/>
        </authorList>
    </citation>
    <scope>NUCLEOTIDE SEQUENCE [GENOMIC DNA]</scope>
    <source>
        <strain>TK21</strain>
    </source>
</reference>
<evidence type="ECO:0000250" key="1"/>
<evidence type="ECO:0000305" key="2"/>
<feature type="chain" id="PRO_0000163540" description="Large ribosomal subunit protein bL19">
    <location>
        <begin position="1"/>
        <end position="116"/>
    </location>
</feature>
<keyword id="KW-0687">Ribonucleoprotein</keyword>
<keyword id="KW-0689">Ribosomal protein</keyword>
<comment type="function">
    <text evidence="1">This protein is located at the 30S-50S ribosomal subunit interface and may play a role in the structure and function of the aminoacyl-tRNA binding site.</text>
</comment>
<comment type="similarity">
    <text evidence="2">Belongs to the bacterial ribosomal protein bL19 family.</text>
</comment>
<name>RL19_STRLI</name>
<accession>P0A478</accession>
<accession>O69883</accession>
<protein>
    <recommendedName>
        <fullName evidence="2">Large ribosomal subunit protein bL19</fullName>
    </recommendedName>
    <alternativeName>
        <fullName>50S ribosomal protein L19</fullName>
    </alternativeName>
</protein>
<sequence>MSHLLDSVDAASLRSDVPAFRPGDTVNVHVRVIEGNRSRVQQFKGVVIRRQGAGVRETFTVRKVSFSVGVERTFPVHTPIVEKIELVTRGDVRRAKLYYLRELRGKAAKIKEKRDS</sequence>
<organism>
    <name type="scientific">Streptomyces lividans</name>
    <dbReference type="NCBI Taxonomy" id="1916"/>
    <lineage>
        <taxon>Bacteria</taxon>
        <taxon>Bacillati</taxon>
        <taxon>Actinomycetota</taxon>
        <taxon>Actinomycetes</taxon>
        <taxon>Kitasatosporales</taxon>
        <taxon>Streptomycetaceae</taxon>
        <taxon>Streptomyces</taxon>
    </lineage>
</organism>
<proteinExistence type="inferred from homology"/>
<gene>
    <name type="primary">rplS</name>
</gene>